<proteinExistence type="evidence at transcript level"/>
<evidence type="ECO:0000250" key="1">
    <source>
        <dbReference type="UniProtKB" id="Q9NX47"/>
    </source>
</evidence>
<evidence type="ECO:0000255" key="2"/>
<evidence type="ECO:0000255" key="3">
    <source>
        <dbReference type="PROSITE-ProRule" id="PRU00623"/>
    </source>
</evidence>
<evidence type="ECO:0000305" key="4"/>
<dbReference type="EC" id="2.3.2.27"/>
<dbReference type="EMBL" id="AJ720593">
    <property type="protein sequence ID" value="CAG32252.1"/>
    <property type="molecule type" value="mRNA"/>
</dbReference>
<dbReference type="RefSeq" id="NP_001012924.1">
    <property type="nucleotide sequence ID" value="NM_001012906.2"/>
</dbReference>
<dbReference type="SMR" id="Q5ZJ41"/>
<dbReference type="FunCoup" id="Q5ZJ41">
    <property type="interactions" value="1050"/>
</dbReference>
<dbReference type="STRING" id="9031.ENSGALP00000054982"/>
<dbReference type="PaxDb" id="9031-ENSGALP00000011138"/>
<dbReference type="GeneID" id="423815"/>
<dbReference type="KEGG" id="gga:423815"/>
<dbReference type="CTD" id="54708"/>
<dbReference type="VEuPathDB" id="HostDB:geneid_423815"/>
<dbReference type="eggNOG" id="KOG3053">
    <property type="taxonomic scope" value="Eukaryota"/>
</dbReference>
<dbReference type="HOGENOM" id="CLU_046472_1_1_1"/>
<dbReference type="InParanoid" id="Q5ZJ41"/>
<dbReference type="OMA" id="KRYCWVC"/>
<dbReference type="OrthoDB" id="5817083at2759"/>
<dbReference type="PhylomeDB" id="Q5ZJ41"/>
<dbReference type="UniPathway" id="UPA00143"/>
<dbReference type="PRO" id="PR:Q5ZJ41"/>
<dbReference type="Proteomes" id="UP000000539">
    <property type="component" value="Unassembled WGS sequence"/>
</dbReference>
<dbReference type="GO" id="GO:0005783">
    <property type="term" value="C:endoplasmic reticulum"/>
    <property type="evidence" value="ECO:0000250"/>
    <property type="project" value="UniProtKB"/>
</dbReference>
<dbReference type="GO" id="GO:0005789">
    <property type="term" value="C:endoplasmic reticulum membrane"/>
    <property type="evidence" value="ECO:0007669"/>
    <property type="project" value="UniProtKB-SubCell"/>
</dbReference>
<dbReference type="GO" id="GO:0005741">
    <property type="term" value="C:mitochondrial outer membrane"/>
    <property type="evidence" value="ECO:0000250"/>
    <property type="project" value="UniProtKB"/>
</dbReference>
<dbReference type="GO" id="GO:0061630">
    <property type="term" value="F:ubiquitin protein ligase activity"/>
    <property type="evidence" value="ECO:0000250"/>
    <property type="project" value="UniProtKB"/>
</dbReference>
<dbReference type="GO" id="GO:0008270">
    <property type="term" value="F:zinc ion binding"/>
    <property type="evidence" value="ECO:0007669"/>
    <property type="project" value="UniProtKB-KW"/>
</dbReference>
<dbReference type="GO" id="GO:0051865">
    <property type="term" value="P:protein autoubiquitination"/>
    <property type="evidence" value="ECO:0000250"/>
    <property type="project" value="UniProtKB"/>
</dbReference>
<dbReference type="GO" id="GO:0000209">
    <property type="term" value="P:protein polyubiquitination"/>
    <property type="evidence" value="ECO:0000318"/>
    <property type="project" value="GO_Central"/>
</dbReference>
<dbReference type="GO" id="GO:0090140">
    <property type="term" value="P:regulation of mitochondrial fission"/>
    <property type="evidence" value="ECO:0000250"/>
    <property type="project" value="UniProtKB"/>
</dbReference>
<dbReference type="CDD" id="cd16701">
    <property type="entry name" value="RING_CH-C4HC3_MARCH5"/>
    <property type="match status" value="1"/>
</dbReference>
<dbReference type="FunFam" id="3.30.40.10:FF:000262">
    <property type="entry name" value="E3 ubiquitin-protein ligase MARCH5"/>
    <property type="match status" value="1"/>
</dbReference>
<dbReference type="Gene3D" id="3.30.40.10">
    <property type="entry name" value="Zinc/RING finger domain, C3HC4 (zinc finger)"/>
    <property type="match status" value="1"/>
</dbReference>
<dbReference type="InterPro" id="IPR011016">
    <property type="entry name" value="Znf_RING-CH"/>
</dbReference>
<dbReference type="InterPro" id="IPR013083">
    <property type="entry name" value="Znf_RING/FYVE/PHD"/>
</dbReference>
<dbReference type="PANTHER" id="PTHR46283">
    <property type="entry name" value="E3 UBIQUITIN-PROTEIN LIGASE MARCH5"/>
    <property type="match status" value="1"/>
</dbReference>
<dbReference type="Pfam" id="PF12906">
    <property type="entry name" value="RINGv"/>
    <property type="match status" value="1"/>
</dbReference>
<dbReference type="SMART" id="SM00744">
    <property type="entry name" value="RINGv"/>
    <property type="match status" value="1"/>
</dbReference>
<dbReference type="SUPFAM" id="SSF57850">
    <property type="entry name" value="RING/U-box"/>
    <property type="match status" value="1"/>
</dbReference>
<dbReference type="PROSITE" id="PS51292">
    <property type="entry name" value="ZF_RING_CH"/>
    <property type="match status" value="1"/>
</dbReference>
<organism>
    <name type="scientific">Gallus gallus</name>
    <name type="common">Chicken</name>
    <dbReference type="NCBI Taxonomy" id="9031"/>
    <lineage>
        <taxon>Eukaryota</taxon>
        <taxon>Metazoa</taxon>
        <taxon>Chordata</taxon>
        <taxon>Craniata</taxon>
        <taxon>Vertebrata</taxon>
        <taxon>Euteleostomi</taxon>
        <taxon>Archelosauria</taxon>
        <taxon>Archosauria</taxon>
        <taxon>Dinosauria</taxon>
        <taxon>Saurischia</taxon>
        <taxon>Theropoda</taxon>
        <taxon>Coelurosauria</taxon>
        <taxon>Aves</taxon>
        <taxon>Neognathae</taxon>
        <taxon>Galloanserae</taxon>
        <taxon>Galliformes</taxon>
        <taxon>Phasianidae</taxon>
        <taxon>Phasianinae</taxon>
        <taxon>Gallus</taxon>
    </lineage>
</organism>
<gene>
    <name type="primary">MARCHF5</name>
    <name type="synonym">MARCH5</name>
    <name type="ORF">RCJMB04_20o22</name>
</gene>
<keyword id="KW-0256">Endoplasmic reticulum</keyword>
<keyword id="KW-0472">Membrane</keyword>
<keyword id="KW-0479">Metal-binding</keyword>
<keyword id="KW-0496">Mitochondrion</keyword>
<keyword id="KW-1000">Mitochondrion outer membrane</keyword>
<keyword id="KW-1185">Reference proteome</keyword>
<keyword id="KW-0808">Transferase</keyword>
<keyword id="KW-0812">Transmembrane</keyword>
<keyword id="KW-1133">Transmembrane helix</keyword>
<keyword id="KW-0833">Ubl conjugation pathway</keyword>
<keyword id="KW-0862">Zinc</keyword>
<keyword id="KW-0863">Zinc-finger</keyword>
<protein>
    <recommendedName>
        <fullName>E3 ubiquitin-protein ligase MARCHF5</fullName>
        <ecNumber>2.3.2.27</ecNumber>
    </recommendedName>
    <alternativeName>
        <fullName>Membrane-associated RING finger protein 5</fullName>
    </alternativeName>
    <alternativeName>
        <fullName>Membrane-associated RING-CH protein V</fullName>
        <shortName>MARCH-V</shortName>
    </alternativeName>
    <alternativeName>
        <fullName evidence="4">RING-type E3 ubiquitin transferase MARCHF5</fullName>
    </alternativeName>
</protein>
<sequence>MSEQTGLALPQTMDRSCWVCFATDEDDRTAEWVRPCRCRGSTKWVHQTCLQRWVDEKQRGNSTARVACPQCNAEYLIVFPKLGPVVYVLDLADRLISKACPFAAAGIMVGSIYWTAVTYGAVTVMQVVGHKEGLDVMERADPLFLLIGLPTIPVMLILGKMIRWEDYVLRLWRKYSNKLQILNSIFPGIGCPVPRIPAEANPLADHVSATRILCGALVFPTIATIVGKLMFSSVNSNLQRTILGGIAFVAIKGAFKVYFKQQQYLRQAHRKILNYPEQEGA</sequence>
<name>MARH5_CHICK</name>
<comment type="function">
    <text evidence="1">Mitochondrial E3 ubiquitin-protein ligase that plays a crucial role in the control of mitochondrial morphology by acting as a positive regulator of mitochondrial fission. May play a role in the prevention of cell senescence acting as a regulator of mitochondrial quality control.</text>
</comment>
<comment type="catalytic activity">
    <reaction>
        <text>S-ubiquitinyl-[E2 ubiquitin-conjugating enzyme]-L-cysteine + [acceptor protein]-L-lysine = [E2 ubiquitin-conjugating enzyme]-L-cysteine + N(6)-ubiquitinyl-[acceptor protein]-L-lysine.</text>
        <dbReference type="EC" id="2.3.2.27"/>
    </reaction>
</comment>
<comment type="pathway">
    <text>Protein modification; protein ubiquitination.</text>
</comment>
<comment type="subcellular location">
    <subcellularLocation>
        <location evidence="1">Mitochondrion outer membrane</location>
        <topology evidence="2">Multi-pass membrane protein</topology>
    </subcellularLocation>
    <subcellularLocation>
        <location evidence="1">Endoplasmic reticulum membrane</location>
        <topology evidence="2">Multi-pass membrane protein</topology>
    </subcellularLocation>
</comment>
<comment type="domain">
    <text evidence="3">The RING-CH-type zinc finger domain is required for E3 ligase activity.</text>
</comment>
<feature type="chain" id="PRO_0000271771" description="E3 ubiquitin-protein ligase MARCHF5">
    <location>
        <begin position="1"/>
        <end position="281"/>
    </location>
</feature>
<feature type="transmembrane region" description="Helical" evidence="2">
    <location>
        <begin position="102"/>
        <end position="122"/>
    </location>
</feature>
<feature type="transmembrane region" description="Helical" evidence="2">
    <location>
        <begin position="142"/>
        <end position="162"/>
    </location>
</feature>
<feature type="transmembrane region" description="Helical" evidence="2">
    <location>
        <begin position="212"/>
        <end position="232"/>
    </location>
</feature>
<feature type="transmembrane region" description="Helical" evidence="2">
    <location>
        <begin position="241"/>
        <end position="261"/>
    </location>
</feature>
<feature type="zinc finger region" description="RING-CH-type" evidence="3">
    <location>
        <begin position="9"/>
        <end position="78"/>
    </location>
</feature>
<feature type="binding site" evidence="3">
    <location>
        <position position="17"/>
    </location>
    <ligand>
        <name>Zn(2+)</name>
        <dbReference type="ChEBI" id="CHEBI:29105"/>
        <label>1</label>
    </ligand>
</feature>
<feature type="binding site" evidence="3">
    <location>
        <position position="20"/>
    </location>
    <ligand>
        <name>Zn(2+)</name>
        <dbReference type="ChEBI" id="CHEBI:29105"/>
        <label>1</label>
    </ligand>
</feature>
<feature type="binding site" evidence="3">
    <location>
        <position position="36"/>
    </location>
    <ligand>
        <name>Zn(2+)</name>
        <dbReference type="ChEBI" id="CHEBI:29105"/>
        <label>2</label>
    </ligand>
</feature>
<feature type="binding site" evidence="3">
    <location>
        <position position="38"/>
    </location>
    <ligand>
        <name>Zn(2+)</name>
        <dbReference type="ChEBI" id="CHEBI:29105"/>
        <label>2</label>
    </ligand>
</feature>
<feature type="binding site" evidence="3">
    <location>
        <position position="46"/>
    </location>
    <ligand>
        <name>Zn(2+)</name>
        <dbReference type="ChEBI" id="CHEBI:29105"/>
        <label>1</label>
    </ligand>
</feature>
<feature type="binding site" evidence="3">
    <location>
        <position position="49"/>
    </location>
    <ligand>
        <name>Zn(2+)</name>
        <dbReference type="ChEBI" id="CHEBI:29105"/>
        <label>1</label>
    </ligand>
</feature>
<feature type="binding site" evidence="3">
    <location>
        <position position="68"/>
    </location>
    <ligand>
        <name>Zn(2+)</name>
        <dbReference type="ChEBI" id="CHEBI:29105"/>
        <label>2</label>
    </ligand>
</feature>
<feature type="binding site" evidence="3">
    <location>
        <position position="71"/>
    </location>
    <ligand>
        <name>Zn(2+)</name>
        <dbReference type="ChEBI" id="CHEBI:29105"/>
        <label>2</label>
    </ligand>
</feature>
<accession>Q5ZJ41</accession>
<reference key="1">
    <citation type="journal article" date="2005" name="Genome Biol.">
        <title>Full-length cDNAs from chicken bursal lymphocytes to facilitate gene function analysis.</title>
        <authorList>
            <person name="Caldwell R.B."/>
            <person name="Kierzek A.M."/>
            <person name="Arakawa H."/>
            <person name="Bezzubov Y."/>
            <person name="Zaim J."/>
            <person name="Fiedler P."/>
            <person name="Kutter S."/>
            <person name="Blagodatski A."/>
            <person name="Kostovska D."/>
            <person name="Koter M."/>
            <person name="Plachy J."/>
            <person name="Carninci P."/>
            <person name="Hayashizaki Y."/>
            <person name="Buerstedde J.-M."/>
        </authorList>
    </citation>
    <scope>NUCLEOTIDE SEQUENCE [LARGE SCALE MRNA]</scope>
    <source>
        <strain>CB</strain>
        <tissue>Bursa of Fabricius</tissue>
    </source>
</reference>